<protein>
    <recommendedName>
        <fullName>NADH-ubiquinone oxidoreductase chain 4L</fullName>
        <ecNumber>7.1.1.2</ecNumber>
    </recommendedName>
    <alternativeName>
        <fullName>NADH dehydrogenase subunit 4L</fullName>
    </alternativeName>
</protein>
<feature type="chain" id="PRO_0000118490" description="NADH-ubiquinone oxidoreductase chain 4L">
    <location>
        <begin position="1"/>
        <end position="98"/>
    </location>
</feature>
<feature type="transmembrane region" description="Helical" evidence="3">
    <location>
        <begin position="1"/>
        <end position="21"/>
    </location>
</feature>
<feature type="transmembrane region" description="Helical" evidence="3">
    <location>
        <begin position="29"/>
        <end position="49"/>
    </location>
</feature>
<feature type="transmembrane region" description="Helical" evidence="3">
    <location>
        <begin position="61"/>
        <end position="81"/>
    </location>
</feature>
<feature type="helix" evidence="6">
    <location>
        <begin position="3"/>
        <end position="19"/>
    </location>
</feature>
<feature type="helix" evidence="6">
    <location>
        <begin position="26"/>
        <end position="51"/>
    </location>
</feature>
<feature type="helix" evidence="6">
    <location>
        <begin position="55"/>
        <end position="58"/>
    </location>
</feature>
<feature type="helix" evidence="6">
    <location>
        <begin position="59"/>
        <end position="85"/>
    </location>
</feature>
<feature type="helix" evidence="6">
    <location>
        <begin position="90"/>
        <end position="92"/>
    </location>
</feature>
<feature type="helix" evidence="6">
    <location>
        <begin position="95"/>
        <end position="97"/>
    </location>
</feature>
<proteinExistence type="evidence at protein level"/>
<name>NU4LM_SHEEP</name>
<reference key="1">
    <citation type="journal article" date="1998" name="J. Mol. Evol.">
        <title>The complete mitochondrial DNA sequence of the domestic sheep (Ovis aries) and comparison with the other major ovine haplotype.</title>
        <authorList>
            <person name="Hiendleder S."/>
            <person name="Lewalski H."/>
            <person name="Wassmuth R."/>
            <person name="Janke A."/>
        </authorList>
    </citation>
    <scope>NUCLEOTIDE SEQUENCE [LARGE SCALE GENOMIC DNA]</scope>
    <source>
        <strain evidence="5">Merinolandschaf</strain>
        <tissue>Liver</tissue>
    </source>
</reference>
<gene>
    <name type="primary">MT-ND4L</name>
    <name type="synonym">MTND4L</name>
    <name type="synonym">NADH4L</name>
    <name type="synonym">ND4L</name>
</gene>
<evidence type="ECO:0000250" key="1">
    <source>
        <dbReference type="UniProtKB" id="P03901"/>
    </source>
</evidence>
<evidence type="ECO:0000250" key="2">
    <source>
        <dbReference type="UniProtKB" id="P03902"/>
    </source>
</evidence>
<evidence type="ECO:0000255" key="3"/>
<evidence type="ECO:0000305" key="4"/>
<evidence type="ECO:0000312" key="5">
    <source>
        <dbReference type="Proteomes" id="UP000002356"/>
    </source>
</evidence>
<evidence type="ECO:0007829" key="6">
    <source>
        <dbReference type="PDB" id="6ZKA"/>
    </source>
</evidence>
<sequence length="98" mass="10837">MSLVYMNIMMAFTVSLTGLLMYRSHLMSSLLCLEGMMLSLFILATLMILNSHFTLASMMPIILLVFAACEAALGLSLLVMVSNTYGTDYVQNLNLLQC</sequence>
<comment type="function">
    <text evidence="1">Core subunit of the mitochondrial membrane respiratory chain NADH dehydrogenase (Complex I) which catalyzes electron transfer from NADH through the respiratory chain, using ubiquinone as an electron acceptor. Part of the enzyme membrane arm which is embedded in the lipid bilayer and involved in proton translocation.</text>
</comment>
<comment type="catalytic activity">
    <reaction evidence="1">
        <text>a ubiquinone + NADH + 5 H(+)(in) = a ubiquinol + NAD(+) + 4 H(+)(out)</text>
        <dbReference type="Rhea" id="RHEA:29091"/>
        <dbReference type="Rhea" id="RHEA-COMP:9565"/>
        <dbReference type="Rhea" id="RHEA-COMP:9566"/>
        <dbReference type="ChEBI" id="CHEBI:15378"/>
        <dbReference type="ChEBI" id="CHEBI:16389"/>
        <dbReference type="ChEBI" id="CHEBI:17976"/>
        <dbReference type="ChEBI" id="CHEBI:57540"/>
        <dbReference type="ChEBI" id="CHEBI:57945"/>
        <dbReference type="EC" id="7.1.1.2"/>
    </reaction>
    <physiologicalReaction direction="left-to-right" evidence="1">
        <dbReference type="Rhea" id="RHEA:29092"/>
    </physiologicalReaction>
</comment>
<comment type="subunit">
    <text evidence="2">Core subunit of respiratory chain NADH dehydrogenase (Complex I) which is composed of 45 different subunits.</text>
</comment>
<comment type="subcellular location">
    <subcellularLocation>
        <location evidence="2">Mitochondrion inner membrane</location>
        <topology evidence="3">Multi-pass membrane protein</topology>
    </subcellularLocation>
</comment>
<comment type="similarity">
    <text evidence="4">Belongs to the complex I subunit 4L family.</text>
</comment>
<dbReference type="EC" id="7.1.1.2"/>
<dbReference type="EMBL" id="AF010406">
    <property type="protein sequence ID" value="AAD10103.1"/>
    <property type="molecule type" value="Genomic_DNA"/>
</dbReference>
<dbReference type="PIR" id="T11058">
    <property type="entry name" value="T11058"/>
</dbReference>
<dbReference type="RefSeq" id="NP_008414.1">
    <property type="nucleotide sequence ID" value="NC_001941.1"/>
</dbReference>
<dbReference type="PDB" id="5LNK">
    <property type="method" value="EM"/>
    <property type="resolution" value="3.90 A"/>
    <property type="chains" value="K=1-98"/>
</dbReference>
<dbReference type="PDB" id="6Q9B">
    <property type="method" value="EM"/>
    <property type="resolution" value="3.90 A"/>
    <property type="chains" value="4L=1-98"/>
</dbReference>
<dbReference type="PDB" id="6QA9">
    <property type="method" value="EM"/>
    <property type="resolution" value="4.10 A"/>
    <property type="chains" value="4L=1-98"/>
</dbReference>
<dbReference type="PDB" id="6QBX">
    <property type="method" value="EM"/>
    <property type="resolution" value="4.20 A"/>
    <property type="chains" value="4L=1-98"/>
</dbReference>
<dbReference type="PDB" id="6QC2">
    <property type="method" value="EM"/>
    <property type="resolution" value="4.20 A"/>
    <property type="chains" value="4L=1-98"/>
</dbReference>
<dbReference type="PDB" id="6QC3">
    <property type="method" value="EM"/>
    <property type="resolution" value="4.20 A"/>
    <property type="chains" value="4L=1-98"/>
</dbReference>
<dbReference type="PDB" id="6QC4">
    <property type="method" value="EM"/>
    <property type="resolution" value="4.60 A"/>
    <property type="chains" value="4L=1-98"/>
</dbReference>
<dbReference type="PDB" id="6QC5">
    <property type="method" value="EM"/>
    <property type="resolution" value="4.30 A"/>
    <property type="chains" value="4L=1-98"/>
</dbReference>
<dbReference type="PDB" id="6QC6">
    <property type="method" value="EM"/>
    <property type="resolution" value="4.10 A"/>
    <property type="chains" value="4L=1-98"/>
</dbReference>
<dbReference type="PDB" id="6QC7">
    <property type="method" value="EM"/>
    <property type="resolution" value="4.40 A"/>
    <property type="chains" value="4L=1-98"/>
</dbReference>
<dbReference type="PDB" id="6QC8">
    <property type="method" value="EM"/>
    <property type="resolution" value="4.20 A"/>
    <property type="chains" value="4L=1-98"/>
</dbReference>
<dbReference type="PDB" id="6QC9">
    <property type="method" value="EM"/>
    <property type="resolution" value="5.70 A"/>
    <property type="chains" value="4L=1-98"/>
</dbReference>
<dbReference type="PDB" id="6QCA">
    <property type="method" value="EM"/>
    <property type="resolution" value="6.20 A"/>
    <property type="chains" value="4L=1-98"/>
</dbReference>
<dbReference type="PDB" id="6QCF">
    <property type="method" value="EM"/>
    <property type="resolution" value="6.50 A"/>
    <property type="chains" value="4L=1-98"/>
</dbReference>
<dbReference type="PDB" id="6ZKA">
    <property type="method" value="EM"/>
    <property type="resolution" value="2.50 A"/>
    <property type="chains" value="K=1-98"/>
</dbReference>
<dbReference type="PDB" id="6ZKB">
    <property type="method" value="EM"/>
    <property type="resolution" value="2.90 A"/>
    <property type="chains" value="K=1-98"/>
</dbReference>
<dbReference type="PDB" id="6ZKC">
    <property type="method" value="EM"/>
    <property type="resolution" value="3.10 A"/>
    <property type="chains" value="K=1-98"/>
</dbReference>
<dbReference type="PDB" id="6ZKD">
    <property type="method" value="EM"/>
    <property type="resolution" value="2.70 A"/>
    <property type="chains" value="K=1-98"/>
</dbReference>
<dbReference type="PDB" id="6ZKE">
    <property type="method" value="EM"/>
    <property type="resolution" value="2.60 A"/>
    <property type="chains" value="K=1-98"/>
</dbReference>
<dbReference type="PDB" id="6ZKF">
    <property type="method" value="EM"/>
    <property type="resolution" value="2.80 A"/>
    <property type="chains" value="K=1-98"/>
</dbReference>
<dbReference type="PDB" id="6ZKG">
    <property type="method" value="EM"/>
    <property type="resolution" value="3.40 A"/>
    <property type="chains" value="K=1-98"/>
</dbReference>
<dbReference type="PDB" id="6ZKH">
    <property type="method" value="EM"/>
    <property type="resolution" value="3.00 A"/>
    <property type="chains" value="K=1-98"/>
</dbReference>
<dbReference type="PDB" id="6ZKI">
    <property type="method" value="EM"/>
    <property type="resolution" value="2.80 A"/>
    <property type="chains" value="K=1-98"/>
</dbReference>
<dbReference type="PDB" id="6ZKJ">
    <property type="method" value="EM"/>
    <property type="resolution" value="3.00 A"/>
    <property type="chains" value="K=1-98"/>
</dbReference>
<dbReference type="PDB" id="6ZKK">
    <property type="method" value="EM"/>
    <property type="resolution" value="3.70 A"/>
    <property type="chains" value="K=1-98"/>
</dbReference>
<dbReference type="PDB" id="6ZKL">
    <property type="method" value="EM"/>
    <property type="resolution" value="3.10 A"/>
    <property type="chains" value="K=1-98"/>
</dbReference>
<dbReference type="PDB" id="6ZKM">
    <property type="method" value="EM"/>
    <property type="resolution" value="2.80 A"/>
    <property type="chains" value="K=1-98"/>
</dbReference>
<dbReference type="PDB" id="6ZKN">
    <property type="method" value="EM"/>
    <property type="resolution" value="2.90 A"/>
    <property type="chains" value="K=1-98"/>
</dbReference>
<dbReference type="PDB" id="6ZKO">
    <property type="method" value="EM"/>
    <property type="resolution" value="3.80 A"/>
    <property type="chains" value="K=1-98"/>
</dbReference>
<dbReference type="PDB" id="6ZKP">
    <property type="method" value="EM"/>
    <property type="resolution" value="3.20 A"/>
    <property type="chains" value="K=1-98"/>
</dbReference>
<dbReference type="PDB" id="6ZKQ">
    <property type="method" value="EM"/>
    <property type="resolution" value="3.30 A"/>
    <property type="chains" value="K=1-98"/>
</dbReference>
<dbReference type="PDB" id="6ZKR">
    <property type="method" value="EM"/>
    <property type="resolution" value="3.50 A"/>
    <property type="chains" value="K=1-98"/>
</dbReference>
<dbReference type="PDB" id="6ZKS">
    <property type="method" value="EM"/>
    <property type="resolution" value="3.10 A"/>
    <property type="chains" value="K=1-98"/>
</dbReference>
<dbReference type="PDB" id="6ZKT">
    <property type="method" value="EM"/>
    <property type="resolution" value="2.80 A"/>
    <property type="chains" value="K=1-98"/>
</dbReference>
<dbReference type="PDB" id="6ZKU">
    <property type="method" value="EM"/>
    <property type="resolution" value="3.00 A"/>
    <property type="chains" value="K=1-98"/>
</dbReference>
<dbReference type="PDB" id="6ZKV">
    <property type="method" value="EM"/>
    <property type="resolution" value="2.90 A"/>
    <property type="chains" value="K=1-98"/>
</dbReference>
<dbReference type="PDB" id="7ZD6">
    <property type="method" value="EM"/>
    <property type="resolution" value="3.16 A"/>
    <property type="chains" value="K=1-98"/>
</dbReference>
<dbReference type="PDB" id="7ZDH">
    <property type="method" value="EM"/>
    <property type="resolution" value="3.46 A"/>
    <property type="chains" value="K=1-98"/>
</dbReference>
<dbReference type="PDB" id="7ZDJ">
    <property type="method" value="EM"/>
    <property type="resolution" value="3.25 A"/>
    <property type="chains" value="K=1-98"/>
</dbReference>
<dbReference type="PDB" id="7ZDM">
    <property type="method" value="EM"/>
    <property type="resolution" value="3.44 A"/>
    <property type="chains" value="K=1-98"/>
</dbReference>
<dbReference type="PDB" id="7ZDP">
    <property type="method" value="EM"/>
    <property type="resolution" value="3.88 A"/>
    <property type="chains" value="K=1-98"/>
</dbReference>
<dbReference type="PDB" id="7ZEB">
    <property type="method" value="EM"/>
    <property type="resolution" value="3.80 A"/>
    <property type="chains" value="K=1-98"/>
</dbReference>
<dbReference type="PDBsum" id="5LNK"/>
<dbReference type="PDBsum" id="6Q9B"/>
<dbReference type="PDBsum" id="6QA9"/>
<dbReference type="PDBsum" id="6QBX"/>
<dbReference type="PDBsum" id="6QC2"/>
<dbReference type="PDBsum" id="6QC3"/>
<dbReference type="PDBsum" id="6QC4"/>
<dbReference type="PDBsum" id="6QC5"/>
<dbReference type="PDBsum" id="6QC6"/>
<dbReference type="PDBsum" id="6QC7"/>
<dbReference type="PDBsum" id="6QC8"/>
<dbReference type="PDBsum" id="6QC9"/>
<dbReference type="PDBsum" id="6QCA"/>
<dbReference type="PDBsum" id="6QCF"/>
<dbReference type="PDBsum" id="6ZKA"/>
<dbReference type="PDBsum" id="6ZKB"/>
<dbReference type="PDBsum" id="6ZKC"/>
<dbReference type="PDBsum" id="6ZKD"/>
<dbReference type="PDBsum" id="6ZKE"/>
<dbReference type="PDBsum" id="6ZKF"/>
<dbReference type="PDBsum" id="6ZKG"/>
<dbReference type="PDBsum" id="6ZKH"/>
<dbReference type="PDBsum" id="6ZKI"/>
<dbReference type="PDBsum" id="6ZKJ"/>
<dbReference type="PDBsum" id="6ZKK"/>
<dbReference type="PDBsum" id="6ZKL"/>
<dbReference type="PDBsum" id="6ZKM"/>
<dbReference type="PDBsum" id="6ZKN"/>
<dbReference type="PDBsum" id="6ZKO"/>
<dbReference type="PDBsum" id="6ZKP"/>
<dbReference type="PDBsum" id="6ZKQ"/>
<dbReference type="PDBsum" id="6ZKR"/>
<dbReference type="PDBsum" id="6ZKS"/>
<dbReference type="PDBsum" id="6ZKT"/>
<dbReference type="PDBsum" id="6ZKU"/>
<dbReference type="PDBsum" id="6ZKV"/>
<dbReference type="PDBsum" id="7ZD6"/>
<dbReference type="PDBsum" id="7ZDH"/>
<dbReference type="PDBsum" id="7ZDJ"/>
<dbReference type="PDBsum" id="7ZDM"/>
<dbReference type="PDBsum" id="7ZDP"/>
<dbReference type="PDBsum" id="7ZEB"/>
<dbReference type="EMDB" id="EMD-11242"/>
<dbReference type="EMDB" id="EMD-11243"/>
<dbReference type="EMDB" id="EMD-11244"/>
<dbReference type="EMDB" id="EMD-11245"/>
<dbReference type="EMDB" id="EMD-11246"/>
<dbReference type="EMDB" id="EMD-11247"/>
<dbReference type="EMDB" id="EMD-11248"/>
<dbReference type="EMDB" id="EMD-11249"/>
<dbReference type="EMDB" id="EMD-11250"/>
<dbReference type="EMDB" id="EMD-11251"/>
<dbReference type="EMDB" id="EMD-11252"/>
<dbReference type="EMDB" id="EMD-11253"/>
<dbReference type="EMDB" id="EMD-11254"/>
<dbReference type="EMDB" id="EMD-11255"/>
<dbReference type="EMDB" id="EMD-11256"/>
<dbReference type="EMDB" id="EMD-11257"/>
<dbReference type="EMDB" id="EMD-11258"/>
<dbReference type="EMDB" id="EMD-11259"/>
<dbReference type="EMDB" id="EMD-11260"/>
<dbReference type="EMDB" id="EMD-11261"/>
<dbReference type="EMDB" id="EMD-11262"/>
<dbReference type="EMDB" id="EMD-11263"/>
<dbReference type="EMDB" id="EMD-14637"/>
<dbReference type="EMDB" id="EMD-14648"/>
<dbReference type="EMDB" id="EMD-14651"/>
<dbReference type="EMDB" id="EMD-14658"/>
<dbReference type="EMDB" id="EMD-14664"/>
<dbReference type="EMDB" id="EMD-14688"/>
<dbReference type="EMDB" id="EMD-4479"/>
<dbReference type="EMDB" id="EMD-4482"/>
<dbReference type="EMDB" id="EMD-4493"/>
<dbReference type="EMDB" id="EMD-4494"/>
<dbReference type="EMDB" id="EMD-4495"/>
<dbReference type="EMDB" id="EMD-4496"/>
<dbReference type="EMDB" id="EMD-4497"/>
<dbReference type="EMDB" id="EMD-4498"/>
<dbReference type="EMDB" id="EMD-4499"/>
<dbReference type="EMDB" id="EMD-4500"/>
<dbReference type="EMDB" id="EMD-4501"/>
<dbReference type="EMDB" id="EMD-4502"/>
<dbReference type="EMDB" id="EMD-4505"/>
<dbReference type="EMDB" id="EMD-8128"/>
<dbReference type="SMR" id="O78754"/>
<dbReference type="STRING" id="9940.ENSOARP00000000009"/>
<dbReference type="PaxDb" id="9940-ENSOARP00000000009"/>
<dbReference type="Ensembl" id="ENSOART00020080283">
    <property type="protein sequence ID" value="ENSOARP00020044211"/>
    <property type="gene ID" value="ENSOARG00020040348"/>
</dbReference>
<dbReference type="Ensembl" id="ENSOART00025000028">
    <property type="protein sequence ID" value="ENSOARP00025000010"/>
    <property type="gene ID" value="ENSOARG00025000028"/>
</dbReference>
<dbReference type="Ensembl" id="ENSOART00040000028">
    <property type="protein sequence ID" value="ENSOARP00040000010"/>
    <property type="gene ID" value="ENSOARG00040000028"/>
</dbReference>
<dbReference type="Ensembl" id="ENSOART00180000028">
    <property type="protein sequence ID" value="ENSOARP00180000010"/>
    <property type="gene ID" value="ENSOARG00180000028"/>
</dbReference>
<dbReference type="Ensembl" id="ENSOART00185000028">
    <property type="protein sequence ID" value="ENSOARP00185000010"/>
    <property type="gene ID" value="ENSOARG00185000028"/>
</dbReference>
<dbReference type="Ensembl" id="ENSOART00215000028">
    <property type="protein sequence ID" value="ENSOARP00215000010"/>
    <property type="gene ID" value="ENSOARG00215000028"/>
</dbReference>
<dbReference type="Ensembl" id="ENSOART00220000028">
    <property type="protein sequence ID" value="ENSOARP00220000010"/>
    <property type="gene ID" value="ENSOARG00220000028"/>
</dbReference>
<dbReference type="Ensembl" id="ENSOART00225000028">
    <property type="protein sequence ID" value="ENSOARP00225000010"/>
    <property type="gene ID" value="ENSOARG00225000028"/>
</dbReference>
<dbReference type="Ensembl" id="ENSOART00260000028">
    <property type="protein sequence ID" value="ENSOARP00260000010"/>
    <property type="gene ID" value="ENSOARG00260000028"/>
</dbReference>
<dbReference type="GeneID" id="808256"/>
<dbReference type="KEGG" id="oas:808256"/>
<dbReference type="CTD" id="4539"/>
<dbReference type="eggNOG" id="KOG4669">
    <property type="taxonomic scope" value="Eukaryota"/>
</dbReference>
<dbReference type="HOGENOM" id="CLU_182394_0_0_1"/>
<dbReference type="OMA" id="MYRSHLM"/>
<dbReference type="OrthoDB" id="6146597at2759"/>
<dbReference type="Proteomes" id="UP000002356">
    <property type="component" value="Mitochondrion"/>
</dbReference>
<dbReference type="Bgee" id="ENSOARG00000000027">
    <property type="expression patterns" value="Expressed in adult mammalian kidney and 54 other cell types or tissues"/>
</dbReference>
<dbReference type="ExpressionAtlas" id="O78754">
    <property type="expression patterns" value="baseline"/>
</dbReference>
<dbReference type="GO" id="GO:0005743">
    <property type="term" value="C:mitochondrial inner membrane"/>
    <property type="evidence" value="ECO:0000250"/>
    <property type="project" value="UniProtKB"/>
</dbReference>
<dbReference type="GO" id="GO:0045271">
    <property type="term" value="C:respiratory chain complex I"/>
    <property type="evidence" value="ECO:0000250"/>
    <property type="project" value="UniProtKB"/>
</dbReference>
<dbReference type="GO" id="GO:0008137">
    <property type="term" value="F:NADH dehydrogenase (ubiquinone) activity"/>
    <property type="evidence" value="ECO:0000250"/>
    <property type="project" value="UniProtKB"/>
</dbReference>
<dbReference type="GO" id="GO:0042773">
    <property type="term" value="P:ATP synthesis coupled electron transport"/>
    <property type="evidence" value="ECO:0007669"/>
    <property type="project" value="InterPro"/>
</dbReference>
<dbReference type="FunFam" id="1.10.287.3510:FF:000002">
    <property type="entry name" value="NADH-ubiquinone oxidoreductase chain 4L"/>
    <property type="match status" value="1"/>
</dbReference>
<dbReference type="Gene3D" id="1.10.287.3510">
    <property type="match status" value="1"/>
</dbReference>
<dbReference type="InterPro" id="IPR001133">
    <property type="entry name" value="NADH_UbQ_OxRdtase_chain4L/K"/>
</dbReference>
<dbReference type="InterPro" id="IPR039428">
    <property type="entry name" value="NUOK/Mnh_C1-like"/>
</dbReference>
<dbReference type="PANTHER" id="PTHR11434:SF0">
    <property type="entry name" value="NADH-UBIQUINONE OXIDOREDUCTASE CHAIN 4L"/>
    <property type="match status" value="1"/>
</dbReference>
<dbReference type="PANTHER" id="PTHR11434">
    <property type="entry name" value="NADH-UBIQUINONE OXIDOREDUCTASE SUBUNIT ND4L"/>
    <property type="match status" value="1"/>
</dbReference>
<dbReference type="Pfam" id="PF00420">
    <property type="entry name" value="Oxidored_q2"/>
    <property type="match status" value="1"/>
</dbReference>
<organism>
    <name type="scientific">Ovis aries</name>
    <name type="common">Sheep</name>
    <dbReference type="NCBI Taxonomy" id="9940"/>
    <lineage>
        <taxon>Eukaryota</taxon>
        <taxon>Metazoa</taxon>
        <taxon>Chordata</taxon>
        <taxon>Craniata</taxon>
        <taxon>Vertebrata</taxon>
        <taxon>Euteleostomi</taxon>
        <taxon>Mammalia</taxon>
        <taxon>Eutheria</taxon>
        <taxon>Laurasiatheria</taxon>
        <taxon>Artiodactyla</taxon>
        <taxon>Ruminantia</taxon>
        <taxon>Pecora</taxon>
        <taxon>Bovidae</taxon>
        <taxon>Caprinae</taxon>
        <taxon>Ovis</taxon>
    </lineage>
</organism>
<accession>O78754</accession>
<geneLocation type="mitochondrion"/>
<keyword id="KW-0002">3D-structure</keyword>
<keyword id="KW-0249">Electron transport</keyword>
<keyword id="KW-0472">Membrane</keyword>
<keyword id="KW-0496">Mitochondrion</keyword>
<keyword id="KW-0999">Mitochondrion inner membrane</keyword>
<keyword id="KW-0520">NAD</keyword>
<keyword id="KW-1185">Reference proteome</keyword>
<keyword id="KW-0679">Respiratory chain</keyword>
<keyword id="KW-1278">Translocase</keyword>
<keyword id="KW-0812">Transmembrane</keyword>
<keyword id="KW-1133">Transmembrane helix</keyword>
<keyword id="KW-0813">Transport</keyword>
<keyword id="KW-0830">Ubiquinone</keyword>